<gene>
    <name evidence="1" type="primary">ruvA</name>
    <name type="ordered locus">Rcas_1112</name>
</gene>
<dbReference type="EMBL" id="CP000804">
    <property type="protein sequence ID" value="ABU57211.1"/>
    <property type="molecule type" value="Genomic_DNA"/>
</dbReference>
<dbReference type="RefSeq" id="WP_012119641.1">
    <property type="nucleotide sequence ID" value="NC_009767.1"/>
</dbReference>
<dbReference type="SMR" id="A7NIB1"/>
<dbReference type="STRING" id="383372.Rcas_1112"/>
<dbReference type="KEGG" id="rca:Rcas_1112"/>
<dbReference type="eggNOG" id="COG0632">
    <property type="taxonomic scope" value="Bacteria"/>
</dbReference>
<dbReference type="HOGENOM" id="CLU_087936_3_0_0"/>
<dbReference type="OrthoDB" id="5293449at2"/>
<dbReference type="Proteomes" id="UP000000263">
    <property type="component" value="Chromosome"/>
</dbReference>
<dbReference type="GO" id="GO:0005737">
    <property type="term" value="C:cytoplasm"/>
    <property type="evidence" value="ECO:0007669"/>
    <property type="project" value="UniProtKB-SubCell"/>
</dbReference>
<dbReference type="GO" id="GO:0009379">
    <property type="term" value="C:Holliday junction helicase complex"/>
    <property type="evidence" value="ECO:0007669"/>
    <property type="project" value="InterPro"/>
</dbReference>
<dbReference type="GO" id="GO:0048476">
    <property type="term" value="C:Holliday junction resolvase complex"/>
    <property type="evidence" value="ECO:0007669"/>
    <property type="project" value="UniProtKB-UniRule"/>
</dbReference>
<dbReference type="GO" id="GO:0005524">
    <property type="term" value="F:ATP binding"/>
    <property type="evidence" value="ECO:0007669"/>
    <property type="project" value="InterPro"/>
</dbReference>
<dbReference type="GO" id="GO:0000400">
    <property type="term" value="F:four-way junction DNA binding"/>
    <property type="evidence" value="ECO:0007669"/>
    <property type="project" value="UniProtKB-UniRule"/>
</dbReference>
<dbReference type="GO" id="GO:0009378">
    <property type="term" value="F:four-way junction helicase activity"/>
    <property type="evidence" value="ECO:0007669"/>
    <property type="project" value="InterPro"/>
</dbReference>
<dbReference type="GO" id="GO:0006310">
    <property type="term" value="P:DNA recombination"/>
    <property type="evidence" value="ECO:0007669"/>
    <property type="project" value="UniProtKB-UniRule"/>
</dbReference>
<dbReference type="GO" id="GO:0006281">
    <property type="term" value="P:DNA repair"/>
    <property type="evidence" value="ECO:0007669"/>
    <property type="project" value="UniProtKB-UniRule"/>
</dbReference>
<dbReference type="CDD" id="cd14332">
    <property type="entry name" value="UBA_RuvA_C"/>
    <property type="match status" value="1"/>
</dbReference>
<dbReference type="Gene3D" id="1.10.150.20">
    <property type="entry name" value="5' to 3' exonuclease, C-terminal subdomain"/>
    <property type="match status" value="1"/>
</dbReference>
<dbReference type="Gene3D" id="1.10.8.10">
    <property type="entry name" value="DNA helicase RuvA subunit, C-terminal domain"/>
    <property type="match status" value="1"/>
</dbReference>
<dbReference type="Gene3D" id="2.40.50.140">
    <property type="entry name" value="Nucleic acid-binding proteins"/>
    <property type="match status" value="1"/>
</dbReference>
<dbReference type="HAMAP" id="MF_00031">
    <property type="entry name" value="DNA_HJ_migration_RuvA"/>
    <property type="match status" value="1"/>
</dbReference>
<dbReference type="InterPro" id="IPR013849">
    <property type="entry name" value="DNA_helicase_Holl-junc_RuvA_I"/>
</dbReference>
<dbReference type="InterPro" id="IPR003583">
    <property type="entry name" value="Hlx-hairpin-Hlx_DNA-bd_motif"/>
</dbReference>
<dbReference type="InterPro" id="IPR012340">
    <property type="entry name" value="NA-bd_OB-fold"/>
</dbReference>
<dbReference type="InterPro" id="IPR000085">
    <property type="entry name" value="RuvA"/>
</dbReference>
<dbReference type="InterPro" id="IPR010994">
    <property type="entry name" value="RuvA_2-like"/>
</dbReference>
<dbReference type="InterPro" id="IPR011114">
    <property type="entry name" value="RuvA_C"/>
</dbReference>
<dbReference type="InterPro" id="IPR036267">
    <property type="entry name" value="RuvA_C_sf"/>
</dbReference>
<dbReference type="NCBIfam" id="TIGR00084">
    <property type="entry name" value="ruvA"/>
    <property type="match status" value="1"/>
</dbReference>
<dbReference type="Pfam" id="PF14520">
    <property type="entry name" value="HHH_5"/>
    <property type="match status" value="1"/>
</dbReference>
<dbReference type="Pfam" id="PF07499">
    <property type="entry name" value="RuvA_C"/>
    <property type="match status" value="1"/>
</dbReference>
<dbReference type="Pfam" id="PF01330">
    <property type="entry name" value="RuvA_N"/>
    <property type="match status" value="1"/>
</dbReference>
<dbReference type="SMART" id="SM00278">
    <property type="entry name" value="HhH1"/>
    <property type="match status" value="2"/>
</dbReference>
<dbReference type="SUPFAM" id="SSF46929">
    <property type="entry name" value="DNA helicase RuvA subunit, C-terminal domain"/>
    <property type="match status" value="1"/>
</dbReference>
<dbReference type="SUPFAM" id="SSF50249">
    <property type="entry name" value="Nucleic acid-binding proteins"/>
    <property type="match status" value="1"/>
</dbReference>
<dbReference type="SUPFAM" id="SSF47781">
    <property type="entry name" value="RuvA domain 2-like"/>
    <property type="match status" value="1"/>
</dbReference>
<sequence length="197" mass="20802">MIASVRGTLIAVAADHVVIETGGIGWMIYAPRQVLAAPGDIGAEMRLFTCLIVREDALTLYGFKTVEQRQLFETLLSVTGVGPQAALNLLSSGTTDELRLAIATGDVARLARTPRIGKKLAERLVLELKGKLDIKGLPVAPGVSPAVAAVNAELSEMLVSLGFSSAEASTAIAALPPDAPLDLEERLRLALRYFGAR</sequence>
<reference key="1">
    <citation type="submission" date="2007-08" db="EMBL/GenBank/DDBJ databases">
        <title>Complete sequence of Roseiflexus castenholzii DSM 13941.</title>
        <authorList>
            <consortium name="US DOE Joint Genome Institute"/>
            <person name="Copeland A."/>
            <person name="Lucas S."/>
            <person name="Lapidus A."/>
            <person name="Barry K."/>
            <person name="Glavina del Rio T."/>
            <person name="Dalin E."/>
            <person name="Tice H."/>
            <person name="Pitluck S."/>
            <person name="Thompson L.S."/>
            <person name="Brettin T."/>
            <person name="Bruce D."/>
            <person name="Detter J.C."/>
            <person name="Han C."/>
            <person name="Tapia R."/>
            <person name="Schmutz J."/>
            <person name="Larimer F."/>
            <person name="Land M."/>
            <person name="Hauser L."/>
            <person name="Kyrpides N."/>
            <person name="Mikhailova N."/>
            <person name="Bryant D.A."/>
            <person name="Hanada S."/>
            <person name="Tsukatani Y."/>
            <person name="Richardson P."/>
        </authorList>
    </citation>
    <scope>NUCLEOTIDE SEQUENCE [LARGE SCALE GENOMIC DNA]</scope>
    <source>
        <strain>DSM 13941 / HLO8</strain>
    </source>
</reference>
<organism>
    <name type="scientific">Roseiflexus castenholzii (strain DSM 13941 / HLO8)</name>
    <dbReference type="NCBI Taxonomy" id="383372"/>
    <lineage>
        <taxon>Bacteria</taxon>
        <taxon>Bacillati</taxon>
        <taxon>Chloroflexota</taxon>
        <taxon>Chloroflexia</taxon>
        <taxon>Chloroflexales</taxon>
        <taxon>Roseiflexineae</taxon>
        <taxon>Roseiflexaceae</taxon>
        <taxon>Roseiflexus</taxon>
    </lineage>
</organism>
<evidence type="ECO:0000255" key="1">
    <source>
        <dbReference type="HAMAP-Rule" id="MF_00031"/>
    </source>
</evidence>
<feature type="chain" id="PRO_1000074433" description="Holliday junction branch migration complex subunit RuvA">
    <location>
        <begin position="1"/>
        <end position="197"/>
    </location>
</feature>
<feature type="region of interest" description="Domain I" evidence="1">
    <location>
        <begin position="1"/>
        <end position="64"/>
    </location>
</feature>
<feature type="region of interest" description="Domain II" evidence="1">
    <location>
        <begin position="65"/>
        <end position="145"/>
    </location>
</feature>
<feature type="region of interest" description="Flexible linker" evidence="1">
    <location>
        <begin position="146"/>
        <end position="153"/>
    </location>
</feature>
<feature type="region of interest" description="Domain III" evidence="1">
    <location>
        <begin position="153"/>
        <end position="197"/>
    </location>
</feature>
<name>RUVA_ROSCS</name>
<proteinExistence type="inferred from homology"/>
<keyword id="KW-0963">Cytoplasm</keyword>
<keyword id="KW-0227">DNA damage</keyword>
<keyword id="KW-0233">DNA recombination</keyword>
<keyword id="KW-0234">DNA repair</keyword>
<keyword id="KW-0238">DNA-binding</keyword>
<keyword id="KW-1185">Reference proteome</keyword>
<protein>
    <recommendedName>
        <fullName evidence="1">Holliday junction branch migration complex subunit RuvA</fullName>
    </recommendedName>
</protein>
<comment type="function">
    <text evidence="1">The RuvA-RuvB-RuvC complex processes Holliday junction (HJ) DNA during genetic recombination and DNA repair, while the RuvA-RuvB complex plays an important role in the rescue of blocked DNA replication forks via replication fork reversal (RFR). RuvA specifically binds to HJ cruciform DNA, conferring on it an open structure. The RuvB hexamer acts as an ATP-dependent pump, pulling dsDNA into and through the RuvAB complex. HJ branch migration allows RuvC to scan DNA until it finds its consensus sequence, where it cleaves and resolves the cruciform DNA.</text>
</comment>
<comment type="subunit">
    <text evidence="1">Homotetramer. Forms an RuvA(8)-RuvB(12)-Holliday junction (HJ) complex. HJ DNA is sandwiched between 2 RuvA tetramers; dsDNA enters through RuvA and exits via RuvB. An RuvB hexamer assembles on each DNA strand where it exits the tetramer. Each RuvB hexamer is contacted by two RuvA subunits (via domain III) on 2 adjacent RuvB subunits; this complex drives branch migration. In the full resolvosome a probable DNA-RuvA(4)-RuvB(12)-RuvC(2) complex forms which resolves the HJ.</text>
</comment>
<comment type="subcellular location">
    <subcellularLocation>
        <location evidence="1">Cytoplasm</location>
    </subcellularLocation>
</comment>
<comment type="domain">
    <text evidence="1">Has three domains with a flexible linker between the domains II and III and assumes an 'L' shape. Domain III is highly mobile and contacts RuvB.</text>
</comment>
<comment type="similarity">
    <text evidence="1">Belongs to the RuvA family.</text>
</comment>
<accession>A7NIB1</accession>